<gene>
    <name evidence="1" type="primary">rexB</name>
    <name type="ordered locus">LSEI_1490</name>
</gene>
<protein>
    <recommendedName>
        <fullName evidence="1">ATP-dependent helicase/deoxyribonuclease subunit B</fullName>
        <ecNumber evidence="1">3.1.-.-</ecNumber>
    </recommendedName>
    <alternativeName>
        <fullName evidence="1">ATP-dependent helicase/nuclease subunit RexB</fullName>
    </alternativeName>
</protein>
<evidence type="ECO:0000255" key="1">
    <source>
        <dbReference type="HAMAP-Rule" id="MF_01453"/>
    </source>
</evidence>
<dbReference type="EC" id="3.1.-.-" evidence="1"/>
<dbReference type="EMBL" id="CP000423">
    <property type="protein sequence ID" value="ABJ70266.1"/>
    <property type="molecule type" value="Genomic_DNA"/>
</dbReference>
<dbReference type="RefSeq" id="WP_011674520.1">
    <property type="nucleotide sequence ID" value="NC_008526.1"/>
</dbReference>
<dbReference type="RefSeq" id="YP_806708.1">
    <property type="nucleotide sequence ID" value="NC_008526.1"/>
</dbReference>
<dbReference type="SMR" id="Q038V6"/>
<dbReference type="STRING" id="321967.LSEI_1490"/>
<dbReference type="PaxDb" id="321967-LSEI_1490"/>
<dbReference type="KEGG" id="lca:LSEI_1490"/>
<dbReference type="PATRIC" id="fig|321967.11.peg.1471"/>
<dbReference type="HOGENOM" id="CLU_007838_0_0_9"/>
<dbReference type="Proteomes" id="UP000001651">
    <property type="component" value="Chromosome"/>
</dbReference>
<dbReference type="GO" id="GO:0008409">
    <property type="term" value="F:5'-3' exonuclease activity"/>
    <property type="evidence" value="ECO:0007669"/>
    <property type="project" value="UniProtKB-UniRule"/>
</dbReference>
<dbReference type="GO" id="GO:0005524">
    <property type="term" value="F:ATP binding"/>
    <property type="evidence" value="ECO:0007669"/>
    <property type="project" value="UniProtKB-UniRule"/>
</dbReference>
<dbReference type="GO" id="GO:0003690">
    <property type="term" value="F:double-stranded DNA binding"/>
    <property type="evidence" value="ECO:0007669"/>
    <property type="project" value="UniProtKB-UniRule"/>
</dbReference>
<dbReference type="GO" id="GO:0004386">
    <property type="term" value="F:helicase activity"/>
    <property type="evidence" value="ECO:0007669"/>
    <property type="project" value="UniProtKB-KW"/>
</dbReference>
<dbReference type="GO" id="GO:0016817">
    <property type="term" value="F:hydrolase activity, acting on acid anhydrides"/>
    <property type="evidence" value="ECO:0007669"/>
    <property type="project" value="InterPro"/>
</dbReference>
<dbReference type="GO" id="GO:0000724">
    <property type="term" value="P:double-strand break repair via homologous recombination"/>
    <property type="evidence" value="ECO:0007669"/>
    <property type="project" value="UniProtKB-UniRule"/>
</dbReference>
<dbReference type="Gene3D" id="3.90.320.10">
    <property type="match status" value="1"/>
</dbReference>
<dbReference type="Gene3D" id="3.40.50.300">
    <property type="entry name" value="P-loop containing nucleotide triphosphate hydrolases"/>
    <property type="match status" value="3"/>
</dbReference>
<dbReference type="HAMAP" id="MF_01453">
    <property type="entry name" value="AddB_type2"/>
    <property type="match status" value="1"/>
</dbReference>
<dbReference type="InterPro" id="IPR049035">
    <property type="entry name" value="ADDB_N"/>
</dbReference>
<dbReference type="InterPro" id="IPR014141">
    <property type="entry name" value="DNA_helicase_suRexB"/>
</dbReference>
<dbReference type="InterPro" id="IPR027417">
    <property type="entry name" value="P-loop_NTPase"/>
</dbReference>
<dbReference type="InterPro" id="IPR011604">
    <property type="entry name" value="PDDEXK-like_dom_sf"/>
</dbReference>
<dbReference type="InterPro" id="IPR038726">
    <property type="entry name" value="PDDEXK_AddAB-type"/>
</dbReference>
<dbReference type="PANTHER" id="PTHR30591">
    <property type="entry name" value="RECBCD ENZYME SUBUNIT RECC"/>
    <property type="match status" value="1"/>
</dbReference>
<dbReference type="PANTHER" id="PTHR30591:SF1">
    <property type="entry name" value="RECBCD ENZYME SUBUNIT RECC"/>
    <property type="match status" value="1"/>
</dbReference>
<dbReference type="Pfam" id="PF21445">
    <property type="entry name" value="ADDB_N"/>
    <property type="match status" value="1"/>
</dbReference>
<dbReference type="Pfam" id="PF12705">
    <property type="entry name" value="PDDEXK_1"/>
    <property type="match status" value="1"/>
</dbReference>
<dbReference type="SUPFAM" id="SSF52540">
    <property type="entry name" value="P-loop containing nucleoside triphosphate hydrolases"/>
    <property type="match status" value="1"/>
</dbReference>
<keyword id="KW-0067">ATP-binding</keyword>
<keyword id="KW-0227">DNA damage</keyword>
<keyword id="KW-0234">DNA repair</keyword>
<keyword id="KW-0238">DNA-binding</keyword>
<keyword id="KW-0269">Exonuclease</keyword>
<keyword id="KW-0347">Helicase</keyword>
<keyword id="KW-0378">Hydrolase</keyword>
<keyword id="KW-0540">Nuclease</keyword>
<keyword id="KW-0547">Nucleotide-binding</keyword>
<keyword id="KW-1185">Reference proteome</keyword>
<sequence length="1179" mass="131760">MGLQFILGDATTDHAGTMATMVQANLQADSQNQIFYLVPNHIKFEAEVDLLKRLRAQAASVNGVYAQNRVQVLSFSRLAWYFLKNTALYQQPRLDRASNTMLVAKILGESKEELTIYAGEAHNTGFVTQLADQLSELVTGRITAEDLNTTVAALTPGDRHRAKLRDLGIILDHYEAEIGPYATNASLLSGLQQVMRNQDLSHTFIYLNDFNVFSASETGLVETMIETAAEVTVSLVLDKPYPAAPPVAPNLFLPAGRLYHRLYQKAKTMKVPIRLDRFAKPRPLSEGMKHLADWWQTSTNLQPQAPAQTAQNKEVELAVATDPYHELRTVARQIYQAVRQGARYRDFLILARRLDPYAAVIPAIFEEFNIPQFTDLERPMKDHPLVVLIESLFAIQDHDYQYQDVMRLLHTELLLPENMDIAAFRDALDTTDNHLVRTGITGKKRWTQTDPWRYFQRNPNADDSQLDPEADKTAQINAIKTLVADTVPQLLRQWQTAKTGREAAASLYQWLQTTGVIDQLNVWRQTANADGDLSRSQANEQAWDTFTQLLNDYATILGEADFNRDQFRELLAAGFASATYTQIPSTLDSVVISETGLVRLAKAKHVYVIGATNTAMPDVPNDSGVLNSEERQLLAAQLPDDRFLPEQGPTTTLGDPFINYLGFMAASEKLTLSYPMQNTQENSENQASPYFRQLAQALQLTPATWAPAGLGTSLKAVLGSQRAMLSDFVRAAGEAQHQKLPLSRSWQGVLASLKQTTLAPLAQKLAGSLTYQNDPGRLDPTLAVQLYGRDMNVSVSRLETYYRNQFEYFLKYGLLLQPRPEFELSPADTGSLFHAVLDQYLTQLRDAGQTLADVTAADVAAAVPPLVAAITKRPGYEILGSTHRMAYLTSRLSRLLIQVLTNMRQQQRRTGFRPMRTELQFGRIGDTRGLPGLSWPLPHGGRVNVRGKIDRLDVYRESDAQRFMVVDYKSTQHRFDDSDAYYGIALQMLTYVEAMANVPADPPFVPAGALYFHLQDPKFKFSTDLDLDIDRLKAFKYLGFLVAKDGADLAAVDKTISAETGGRSMMVPLGFKKDGAFNYNQSNILTPEDLSAYLLHNQALIIDAASRILAGDIALAPFQYGQESTVISNSDYQSIMLFDPATGFDHYNHVPKLKRKEVLGRVTTDPTQIPHHRQEDSQA</sequence>
<accession>Q038V6</accession>
<name>ADDB_LACP3</name>
<comment type="function">
    <text evidence="1">The heterodimer acts as both an ATP-dependent DNA helicase and an ATP-dependent, dual-direction single-stranded exonuclease. Recognizes the chi site generating a DNA molecule suitable for the initiation of homologous recombination. This subunit has 5' -&gt; 3' nuclease activity but not helicase activity.</text>
</comment>
<comment type="cofactor">
    <cofactor evidence="1">
        <name>Mg(2+)</name>
        <dbReference type="ChEBI" id="CHEBI:18420"/>
    </cofactor>
</comment>
<comment type="subunit">
    <text evidence="1">Heterodimer of AddA and RexB.</text>
</comment>
<comment type="miscellaneous">
    <text evidence="1">Despite having helicase-like domains, this subunit does not have helicase activity.</text>
</comment>
<comment type="similarity">
    <text evidence="1">Belongs to the helicase family. AddB/RexB type 2 subfamily.</text>
</comment>
<reference key="1">
    <citation type="journal article" date="2006" name="Proc. Natl. Acad. Sci. U.S.A.">
        <title>Comparative genomics of the lactic acid bacteria.</title>
        <authorList>
            <person name="Makarova K.S."/>
            <person name="Slesarev A."/>
            <person name="Wolf Y.I."/>
            <person name="Sorokin A."/>
            <person name="Mirkin B."/>
            <person name="Koonin E.V."/>
            <person name="Pavlov A."/>
            <person name="Pavlova N."/>
            <person name="Karamychev V."/>
            <person name="Polouchine N."/>
            <person name="Shakhova V."/>
            <person name="Grigoriev I."/>
            <person name="Lou Y."/>
            <person name="Rohksar D."/>
            <person name="Lucas S."/>
            <person name="Huang K."/>
            <person name="Goodstein D.M."/>
            <person name="Hawkins T."/>
            <person name="Plengvidhya V."/>
            <person name="Welker D."/>
            <person name="Hughes J."/>
            <person name="Goh Y."/>
            <person name="Benson A."/>
            <person name="Baldwin K."/>
            <person name="Lee J.-H."/>
            <person name="Diaz-Muniz I."/>
            <person name="Dosti B."/>
            <person name="Smeianov V."/>
            <person name="Wechter W."/>
            <person name="Barabote R."/>
            <person name="Lorca G."/>
            <person name="Altermann E."/>
            <person name="Barrangou R."/>
            <person name="Ganesan B."/>
            <person name="Xie Y."/>
            <person name="Rawsthorne H."/>
            <person name="Tamir D."/>
            <person name="Parker C."/>
            <person name="Breidt F."/>
            <person name="Broadbent J.R."/>
            <person name="Hutkins R."/>
            <person name="O'Sullivan D."/>
            <person name="Steele J."/>
            <person name="Unlu G."/>
            <person name="Saier M.H. Jr."/>
            <person name="Klaenhammer T."/>
            <person name="Richardson P."/>
            <person name="Kozyavkin S."/>
            <person name="Weimer B.C."/>
            <person name="Mills D.A."/>
        </authorList>
    </citation>
    <scope>NUCLEOTIDE SEQUENCE [LARGE SCALE GENOMIC DNA]</scope>
    <source>
        <strain>ATCC 334 / BCRC 17002 / CCUG 31169 / CIP 107868 / KCTC 3260 / NRRL B-441</strain>
    </source>
</reference>
<feature type="chain" id="PRO_0000379367" description="ATP-dependent helicase/deoxyribonuclease subunit B">
    <location>
        <begin position="1"/>
        <end position="1179"/>
    </location>
</feature>
<organism>
    <name type="scientific">Lacticaseibacillus paracasei (strain ATCC 334 / BCRC 17002 / CCUG 31169 / CIP 107868 / KCTC 3260 / NRRL B-441)</name>
    <name type="common">Lactobacillus paracasei</name>
    <dbReference type="NCBI Taxonomy" id="321967"/>
    <lineage>
        <taxon>Bacteria</taxon>
        <taxon>Bacillati</taxon>
        <taxon>Bacillota</taxon>
        <taxon>Bacilli</taxon>
        <taxon>Lactobacillales</taxon>
        <taxon>Lactobacillaceae</taxon>
        <taxon>Lacticaseibacillus</taxon>
    </lineage>
</organism>
<proteinExistence type="inferred from homology"/>